<feature type="chain" id="PRO_0000152801" description="Phosphomethylpyrimidine synthase">
    <location>
        <begin position="1"/>
        <end position="587"/>
    </location>
</feature>
<feature type="region of interest" description="Disordered" evidence="2">
    <location>
        <begin position="1"/>
        <end position="58"/>
    </location>
</feature>
<feature type="compositionally biased region" description="Basic and acidic residues" evidence="2">
    <location>
        <begin position="17"/>
        <end position="33"/>
    </location>
</feature>
<feature type="binding site" evidence="1">
    <location>
        <position position="180"/>
    </location>
    <ligand>
        <name>substrate</name>
    </ligand>
</feature>
<feature type="binding site" evidence="1">
    <location>
        <position position="209"/>
    </location>
    <ligand>
        <name>substrate</name>
    </ligand>
</feature>
<feature type="binding site" evidence="1">
    <location>
        <position position="238"/>
    </location>
    <ligand>
        <name>substrate</name>
    </ligand>
</feature>
<feature type="binding site" evidence="1">
    <location>
        <position position="274"/>
    </location>
    <ligand>
        <name>substrate</name>
    </ligand>
</feature>
<feature type="binding site" evidence="1">
    <location>
        <begin position="294"/>
        <end position="296"/>
    </location>
    <ligand>
        <name>substrate</name>
    </ligand>
</feature>
<feature type="binding site" evidence="1">
    <location>
        <begin position="335"/>
        <end position="338"/>
    </location>
    <ligand>
        <name>substrate</name>
    </ligand>
</feature>
<feature type="binding site" evidence="1">
    <location>
        <position position="374"/>
    </location>
    <ligand>
        <name>substrate</name>
    </ligand>
</feature>
<feature type="binding site" evidence="1">
    <location>
        <position position="378"/>
    </location>
    <ligand>
        <name>Zn(2+)</name>
        <dbReference type="ChEBI" id="CHEBI:29105"/>
    </ligand>
</feature>
<feature type="binding site" evidence="1">
    <location>
        <position position="401"/>
    </location>
    <ligand>
        <name>substrate</name>
    </ligand>
</feature>
<feature type="binding site" evidence="1">
    <location>
        <position position="442"/>
    </location>
    <ligand>
        <name>Zn(2+)</name>
        <dbReference type="ChEBI" id="CHEBI:29105"/>
    </ligand>
</feature>
<feature type="binding site" evidence="1">
    <location>
        <position position="522"/>
    </location>
    <ligand>
        <name>[4Fe-4S] cluster</name>
        <dbReference type="ChEBI" id="CHEBI:49883"/>
        <note>4Fe-4S-S-AdoMet</note>
    </ligand>
</feature>
<feature type="binding site" evidence="1">
    <location>
        <position position="525"/>
    </location>
    <ligand>
        <name>[4Fe-4S] cluster</name>
        <dbReference type="ChEBI" id="CHEBI:49883"/>
        <note>4Fe-4S-S-AdoMet</note>
    </ligand>
</feature>
<feature type="binding site" evidence="1">
    <location>
        <position position="530"/>
    </location>
    <ligand>
        <name>[4Fe-4S] cluster</name>
        <dbReference type="ChEBI" id="CHEBI:49883"/>
        <note>4Fe-4S-S-AdoMet</note>
    </ligand>
</feature>
<protein>
    <recommendedName>
        <fullName evidence="1">Phosphomethylpyrimidine synthase</fullName>
        <ecNumber evidence="1">4.1.99.17</ecNumber>
    </recommendedName>
    <alternativeName>
        <fullName evidence="1">Hydroxymethylpyrimidine phosphate synthase</fullName>
        <shortName evidence="1">HMP-P synthase</shortName>
        <shortName evidence="1">HMP-phosphate synthase</shortName>
        <shortName evidence="1">HMPP synthase</shortName>
    </alternativeName>
    <alternativeName>
        <fullName evidence="1">Thiamine biosynthesis protein ThiC</fullName>
    </alternativeName>
</protein>
<dbReference type="EC" id="4.1.99.17" evidence="1"/>
<dbReference type="EMBL" id="BA000036">
    <property type="protein sequence ID" value="BAB98698.1"/>
    <property type="molecule type" value="Genomic_DNA"/>
</dbReference>
<dbReference type="EMBL" id="BX927151">
    <property type="protein sequence ID" value="CAF20005.1"/>
    <property type="molecule type" value="Genomic_DNA"/>
</dbReference>
<dbReference type="RefSeq" id="NP_600527.1">
    <property type="nucleotide sequence ID" value="NC_003450.3"/>
</dbReference>
<dbReference type="RefSeq" id="WP_011014273.1">
    <property type="nucleotide sequence ID" value="NC_006958.1"/>
</dbReference>
<dbReference type="SMR" id="Q8NQW7"/>
<dbReference type="STRING" id="196627.cg1476"/>
<dbReference type="GeneID" id="1019283"/>
<dbReference type="KEGG" id="cgb:cg1476"/>
<dbReference type="KEGG" id="cgl:Cgl1305"/>
<dbReference type="PATRIC" id="fig|196627.13.peg.1280"/>
<dbReference type="eggNOG" id="COG0422">
    <property type="taxonomic scope" value="Bacteria"/>
</dbReference>
<dbReference type="HOGENOM" id="CLU_013181_2_1_11"/>
<dbReference type="OrthoDB" id="9805897at2"/>
<dbReference type="BioCyc" id="CORYNE:G18NG-10883-MONOMER"/>
<dbReference type="UniPathway" id="UPA00060"/>
<dbReference type="Proteomes" id="UP000000582">
    <property type="component" value="Chromosome"/>
</dbReference>
<dbReference type="Proteomes" id="UP000001009">
    <property type="component" value="Chromosome"/>
</dbReference>
<dbReference type="GO" id="GO:0005829">
    <property type="term" value="C:cytosol"/>
    <property type="evidence" value="ECO:0007669"/>
    <property type="project" value="TreeGrafter"/>
</dbReference>
<dbReference type="GO" id="GO:0051539">
    <property type="term" value="F:4 iron, 4 sulfur cluster binding"/>
    <property type="evidence" value="ECO:0007669"/>
    <property type="project" value="UniProtKB-KW"/>
</dbReference>
<dbReference type="GO" id="GO:0016830">
    <property type="term" value="F:carbon-carbon lyase activity"/>
    <property type="evidence" value="ECO:0007669"/>
    <property type="project" value="InterPro"/>
</dbReference>
<dbReference type="GO" id="GO:0008270">
    <property type="term" value="F:zinc ion binding"/>
    <property type="evidence" value="ECO:0007669"/>
    <property type="project" value="UniProtKB-UniRule"/>
</dbReference>
<dbReference type="GO" id="GO:0009228">
    <property type="term" value="P:thiamine biosynthetic process"/>
    <property type="evidence" value="ECO:0007669"/>
    <property type="project" value="UniProtKB-KW"/>
</dbReference>
<dbReference type="GO" id="GO:0009229">
    <property type="term" value="P:thiamine diphosphate biosynthetic process"/>
    <property type="evidence" value="ECO:0007669"/>
    <property type="project" value="UniProtKB-UniRule"/>
</dbReference>
<dbReference type="FunFam" id="3.20.20.540:FF:000001">
    <property type="entry name" value="Phosphomethylpyrimidine synthase"/>
    <property type="match status" value="1"/>
</dbReference>
<dbReference type="Gene3D" id="6.10.250.620">
    <property type="match status" value="1"/>
</dbReference>
<dbReference type="Gene3D" id="3.20.20.540">
    <property type="entry name" value="Radical SAM ThiC family, central domain"/>
    <property type="match status" value="1"/>
</dbReference>
<dbReference type="HAMAP" id="MF_00089">
    <property type="entry name" value="ThiC"/>
    <property type="match status" value="1"/>
</dbReference>
<dbReference type="InterPro" id="IPR037509">
    <property type="entry name" value="ThiC"/>
</dbReference>
<dbReference type="InterPro" id="IPR025747">
    <property type="entry name" value="ThiC-associated_dom"/>
</dbReference>
<dbReference type="InterPro" id="IPR038521">
    <property type="entry name" value="ThiC/Bza_core_dom"/>
</dbReference>
<dbReference type="InterPro" id="IPR002817">
    <property type="entry name" value="ThiC/BzaA/B"/>
</dbReference>
<dbReference type="NCBIfam" id="NF006763">
    <property type="entry name" value="PRK09284.1"/>
    <property type="match status" value="1"/>
</dbReference>
<dbReference type="NCBIfam" id="NF009895">
    <property type="entry name" value="PRK13352.1"/>
    <property type="match status" value="1"/>
</dbReference>
<dbReference type="NCBIfam" id="TIGR00190">
    <property type="entry name" value="thiC"/>
    <property type="match status" value="1"/>
</dbReference>
<dbReference type="PANTHER" id="PTHR30557:SF1">
    <property type="entry name" value="PHOSPHOMETHYLPYRIMIDINE SYNTHASE, CHLOROPLASTIC"/>
    <property type="match status" value="1"/>
</dbReference>
<dbReference type="PANTHER" id="PTHR30557">
    <property type="entry name" value="THIAMINE BIOSYNTHESIS PROTEIN THIC"/>
    <property type="match status" value="1"/>
</dbReference>
<dbReference type="Pfam" id="PF13667">
    <property type="entry name" value="ThiC-associated"/>
    <property type="match status" value="1"/>
</dbReference>
<dbReference type="Pfam" id="PF01964">
    <property type="entry name" value="ThiC_Rad_SAM"/>
    <property type="match status" value="1"/>
</dbReference>
<dbReference type="SFLD" id="SFLDF00407">
    <property type="entry name" value="phosphomethylpyrimidine_syntha"/>
    <property type="match status" value="1"/>
</dbReference>
<dbReference type="SFLD" id="SFLDG01114">
    <property type="entry name" value="phosphomethylpyrimidine_syntha"/>
    <property type="match status" value="1"/>
</dbReference>
<dbReference type="SFLD" id="SFLDS00113">
    <property type="entry name" value="Radical_SAM_Phosphomethylpyrim"/>
    <property type="match status" value="1"/>
</dbReference>
<keyword id="KW-0004">4Fe-4S</keyword>
<keyword id="KW-0408">Iron</keyword>
<keyword id="KW-0411">Iron-sulfur</keyword>
<keyword id="KW-0456">Lyase</keyword>
<keyword id="KW-0479">Metal-binding</keyword>
<keyword id="KW-1185">Reference proteome</keyword>
<keyword id="KW-0949">S-adenosyl-L-methionine</keyword>
<keyword id="KW-0784">Thiamine biosynthesis</keyword>
<keyword id="KW-0862">Zinc</keyword>
<proteinExistence type="inferred from homology"/>
<organism>
    <name type="scientific">Corynebacterium glutamicum (strain ATCC 13032 / DSM 20300 / JCM 1318 / BCRC 11384 / CCUG 27702 / LMG 3730 / NBRC 12168 / NCIMB 10025 / NRRL B-2784 / 534)</name>
    <dbReference type="NCBI Taxonomy" id="196627"/>
    <lineage>
        <taxon>Bacteria</taxon>
        <taxon>Bacillati</taxon>
        <taxon>Actinomycetota</taxon>
        <taxon>Actinomycetes</taxon>
        <taxon>Mycobacteriales</taxon>
        <taxon>Corynebacteriaceae</taxon>
        <taxon>Corynebacterium</taxon>
    </lineage>
</organism>
<evidence type="ECO:0000255" key="1">
    <source>
        <dbReference type="HAMAP-Rule" id="MF_00089"/>
    </source>
</evidence>
<evidence type="ECO:0000256" key="2">
    <source>
        <dbReference type="SAM" id="MobiDB-lite"/>
    </source>
</evidence>
<sequence>MTPTQNEIHPKHSYSPIRKDGLEVPETEIRLDDSPSGPNEPFRIYRTRGPETNPKQGLPRLRESWITARGDVATYQGRERLLIDDGRSAMRRGQASAEWKGQKPAPLKALPGKRVTQMAYARAGVITREMEFVALREHVDAEFVRSEVARGRAIIPNNVNHPESEPMIIGRKFLTKINANIGNSAVTSSIEEEVSKLQWATRWGADTVMDLSTGDDIHTTREWIIRNSPVPIGTVPIYQALEKVNGVAADLNWEVFRDTIIEQCEQGVDYMTIHAGVLLAYIPLTTRRVTGIVSRGGSIMAGWCLAHHRESFLYEHFDELCEIFAQYDVAFSLGDGLRPGSLADANDAAQFAELKTIGELTQRAWEYDVQVMVEGPGHVPLNMIQENNELEQKWAADAPFYTLGPLVTDIAPGYDHITSAIGAAHIAMGGTAMLCYVTPKEHLGLPNRDDVKTGVITYKLAAHAADVAKGHPGARAWDDAMSKARFEFRWNDQFALSLDPDTAIAYHDETLPAEPAKTAHFCSMCGPKFCSMRISQDIRDMFGDQIAELGMPGVGDSSSAVASSGAREGMAEKSREFIAGGAEVYRR</sequence>
<reference key="1">
    <citation type="journal article" date="2003" name="Appl. Microbiol. Biotechnol.">
        <title>The Corynebacterium glutamicum genome: features and impacts on biotechnological processes.</title>
        <authorList>
            <person name="Ikeda M."/>
            <person name="Nakagawa S."/>
        </authorList>
    </citation>
    <scope>NUCLEOTIDE SEQUENCE [LARGE SCALE GENOMIC DNA]</scope>
    <source>
        <strain>ATCC 13032 / DSM 20300 / JCM 1318 / BCRC 11384 / CCUG 27702 / LMG 3730 / NBRC 12168 / NCIMB 10025 / NRRL B-2784 / 534</strain>
    </source>
</reference>
<reference key="2">
    <citation type="journal article" date="2003" name="J. Biotechnol.">
        <title>The complete Corynebacterium glutamicum ATCC 13032 genome sequence and its impact on the production of L-aspartate-derived amino acids and vitamins.</title>
        <authorList>
            <person name="Kalinowski J."/>
            <person name="Bathe B."/>
            <person name="Bartels D."/>
            <person name="Bischoff N."/>
            <person name="Bott M."/>
            <person name="Burkovski A."/>
            <person name="Dusch N."/>
            <person name="Eggeling L."/>
            <person name="Eikmanns B.J."/>
            <person name="Gaigalat L."/>
            <person name="Goesmann A."/>
            <person name="Hartmann M."/>
            <person name="Huthmacher K."/>
            <person name="Kraemer R."/>
            <person name="Linke B."/>
            <person name="McHardy A.C."/>
            <person name="Meyer F."/>
            <person name="Moeckel B."/>
            <person name="Pfefferle W."/>
            <person name="Puehler A."/>
            <person name="Rey D.A."/>
            <person name="Rueckert C."/>
            <person name="Rupp O."/>
            <person name="Sahm H."/>
            <person name="Wendisch V.F."/>
            <person name="Wiegraebe I."/>
            <person name="Tauch A."/>
        </authorList>
    </citation>
    <scope>NUCLEOTIDE SEQUENCE [LARGE SCALE GENOMIC DNA]</scope>
    <source>
        <strain>ATCC 13032 / DSM 20300 / JCM 1318 / BCRC 11384 / CCUG 27702 / LMG 3730 / NBRC 12168 / NCIMB 10025 / NRRL B-2784 / 534</strain>
    </source>
</reference>
<name>THIC_CORGL</name>
<gene>
    <name evidence="1" type="primary">thiC</name>
    <name type="ordered locus">Cgl1305</name>
    <name type="ordered locus">cg1476</name>
</gene>
<comment type="function">
    <text evidence="1">Catalyzes the synthesis of the hydroxymethylpyrimidine phosphate (HMP-P) moiety of thiamine from aminoimidazole ribotide (AIR) in a radical S-adenosyl-L-methionine (SAM)-dependent reaction.</text>
</comment>
<comment type="catalytic activity">
    <reaction evidence="1">
        <text>5-amino-1-(5-phospho-beta-D-ribosyl)imidazole + S-adenosyl-L-methionine = 4-amino-2-methyl-5-(phosphooxymethyl)pyrimidine + CO + 5'-deoxyadenosine + formate + L-methionine + 3 H(+)</text>
        <dbReference type="Rhea" id="RHEA:24840"/>
        <dbReference type="ChEBI" id="CHEBI:15378"/>
        <dbReference type="ChEBI" id="CHEBI:15740"/>
        <dbReference type="ChEBI" id="CHEBI:17245"/>
        <dbReference type="ChEBI" id="CHEBI:17319"/>
        <dbReference type="ChEBI" id="CHEBI:57844"/>
        <dbReference type="ChEBI" id="CHEBI:58354"/>
        <dbReference type="ChEBI" id="CHEBI:59789"/>
        <dbReference type="ChEBI" id="CHEBI:137981"/>
        <dbReference type="EC" id="4.1.99.17"/>
    </reaction>
</comment>
<comment type="cofactor">
    <cofactor evidence="1">
        <name>[4Fe-4S] cluster</name>
        <dbReference type="ChEBI" id="CHEBI:49883"/>
    </cofactor>
    <text evidence="1">Binds 1 [4Fe-4S] cluster per subunit. The cluster is coordinated with 3 cysteines and an exchangeable S-adenosyl-L-methionine.</text>
</comment>
<comment type="pathway">
    <text evidence="1">Cofactor biosynthesis; thiamine diphosphate biosynthesis.</text>
</comment>
<comment type="similarity">
    <text evidence="1">Belongs to the ThiC family.</text>
</comment>
<accession>Q8NQW7</accession>